<proteinExistence type="evidence at transcript level"/>
<dbReference type="EMBL" id="AC001229">
    <property type="status" value="NOT_ANNOTATED_CDS"/>
    <property type="molecule type" value="Genomic_DNA"/>
</dbReference>
<dbReference type="EMBL" id="CP002684">
    <property type="protein sequence ID" value="ANM58206.1"/>
    <property type="molecule type" value="Genomic_DNA"/>
</dbReference>
<dbReference type="RefSeq" id="NP_001320660.1">
    <property type="nucleotide sequence ID" value="NM_001334210.1"/>
</dbReference>
<dbReference type="FunCoup" id="A0A1P8ANJ1">
    <property type="interactions" value="47"/>
</dbReference>
<dbReference type="STRING" id="3702.A0A1P8ANJ1"/>
<dbReference type="EnsemblPlants" id="AT1G65490.2">
    <property type="protein sequence ID" value="AT1G65490.2"/>
    <property type="gene ID" value="AT1G65490"/>
</dbReference>
<dbReference type="GeneID" id="842861"/>
<dbReference type="Gramene" id="AT1G65490.2">
    <property type="protein sequence ID" value="AT1G65490.2"/>
    <property type="gene ID" value="AT1G65490"/>
</dbReference>
<dbReference type="KEGG" id="ath:AT1G65490"/>
<dbReference type="Araport" id="AT1G65490"/>
<dbReference type="TAIR" id="AT1G65490">
    <property type="gene designation" value="STMP5"/>
</dbReference>
<dbReference type="InParanoid" id="A0A1P8ANJ1"/>
<dbReference type="PRO" id="PR:A0A1P8ANJ1"/>
<dbReference type="Proteomes" id="UP000006548">
    <property type="component" value="Chromosome 1"/>
</dbReference>
<dbReference type="ExpressionAtlas" id="A0A1P8ANJ1">
    <property type="expression patterns" value="baseline and differential"/>
</dbReference>
<dbReference type="GO" id="GO:0048046">
    <property type="term" value="C:apoplast"/>
    <property type="evidence" value="ECO:0000314"/>
    <property type="project" value="UniProtKB"/>
</dbReference>
<dbReference type="GO" id="GO:0005886">
    <property type="term" value="C:plasma membrane"/>
    <property type="evidence" value="ECO:0007669"/>
    <property type="project" value="UniProtKB-SubCell"/>
</dbReference>
<dbReference type="GO" id="GO:0030275">
    <property type="term" value="F:LRR domain binding"/>
    <property type="evidence" value="ECO:0000250"/>
    <property type="project" value="UniProtKB"/>
</dbReference>
<dbReference type="GO" id="GO:0033612">
    <property type="term" value="F:receptor serine/threonine kinase binding"/>
    <property type="evidence" value="ECO:0000250"/>
    <property type="project" value="UniProtKB"/>
</dbReference>
<dbReference type="GO" id="GO:0009617">
    <property type="term" value="P:response to bacterium"/>
    <property type="evidence" value="ECO:0000270"/>
    <property type="project" value="UniProtKB"/>
</dbReference>
<dbReference type="GO" id="GO:0009723">
    <property type="term" value="P:response to ethylene"/>
    <property type="evidence" value="ECO:0000270"/>
    <property type="project" value="UniProtKB"/>
</dbReference>
<dbReference type="GO" id="GO:0009753">
    <property type="term" value="P:response to jasmonic acid"/>
    <property type="evidence" value="ECO:0000270"/>
    <property type="project" value="UniProtKB"/>
</dbReference>
<dbReference type="GO" id="GO:0009751">
    <property type="term" value="P:response to salicylic acid"/>
    <property type="evidence" value="ECO:0000270"/>
    <property type="project" value="UniProtKB"/>
</dbReference>
<organism>
    <name type="scientific">Arabidopsis thaliana</name>
    <name type="common">Mouse-ear cress</name>
    <dbReference type="NCBI Taxonomy" id="3702"/>
    <lineage>
        <taxon>Eukaryota</taxon>
        <taxon>Viridiplantae</taxon>
        <taxon>Streptophyta</taxon>
        <taxon>Embryophyta</taxon>
        <taxon>Tracheophyta</taxon>
        <taxon>Spermatophyta</taxon>
        <taxon>Magnoliopsida</taxon>
        <taxon>eudicotyledons</taxon>
        <taxon>Gunneridae</taxon>
        <taxon>Pentapetalae</taxon>
        <taxon>rosids</taxon>
        <taxon>malvids</taxon>
        <taxon>Brassicales</taxon>
        <taxon>Brassicaceae</taxon>
        <taxon>Camelineae</taxon>
        <taxon>Arabidopsis</taxon>
    </lineage>
</organism>
<accession>A0A1P8ANJ1</accession>
<name>STMP5_ARATH</name>
<evidence type="ECO:0000250" key="1">
    <source>
        <dbReference type="UniProtKB" id="A0A1P8AQ95"/>
    </source>
</evidence>
<evidence type="ECO:0000250" key="2">
    <source>
        <dbReference type="UniProtKB" id="B3H7I1"/>
    </source>
</evidence>
<evidence type="ECO:0000255" key="3"/>
<evidence type="ECO:0000256" key="4">
    <source>
        <dbReference type="SAM" id="MobiDB-lite"/>
    </source>
</evidence>
<evidence type="ECO:0000269" key="5">
    <source>
    </source>
</evidence>
<evidence type="ECO:0000303" key="6">
    <source>
    </source>
</evidence>
<evidence type="ECO:0000305" key="7"/>
<evidence type="ECO:0000312" key="8">
    <source>
        <dbReference type="Araport" id="AT1G65490"/>
    </source>
</evidence>
<evidence type="ECO:0000312" key="9">
    <source>
        <dbReference type="EMBL" id="AC001229"/>
    </source>
</evidence>
<protein>
    <recommendedName>
        <fullName evidence="6">Secreted transmembrane peptide 5</fullName>
    </recommendedName>
    <alternativeName>
        <fullName evidence="7">Phytocytokine STMP5</fullName>
    </alternativeName>
    <alternativeName>
        <fullName evidence="7">Precursor of secreted transmembrane peptide 5</fullName>
    </alternativeName>
</protein>
<keyword id="KW-0052">Apoplast</keyword>
<keyword id="KW-1003">Cell membrane</keyword>
<keyword id="KW-0165">Cleavage on pair of basic residues</keyword>
<keyword id="KW-0472">Membrane</keyword>
<keyword id="KW-1185">Reference proteome</keyword>
<keyword id="KW-0964">Secreted</keyword>
<keyword id="KW-0732">Signal</keyword>
<comment type="function">
    <text evidence="2">Brassicaceae-specific phytocytokine (plant endogenous peptide released into the apoplast) perceived by MIK2 in a BAK1/SERK3 and SERK4 coreceptors-dependent manner, that modulates various physiological and antimicrobial processes including growth prevention and reactive oxygen species (ROS) response regulation.</text>
</comment>
<comment type="subunit">
    <text evidence="2">Interacts with MIK2 (via extracellular leucine-rich repeat domain); this interaction triggers the formation of complex between MIK2 and the BAK1/SERK3 and SERK4 coreceptors, and subsequent BAK1 activation by phosphorylation.</text>
</comment>
<comment type="subcellular location">
    <subcellularLocation>
        <location evidence="5">Cell membrane</location>
    </subcellularLocation>
    <subcellularLocation>
        <location evidence="5">Secreted</location>
        <location evidence="5">Extracellular space</location>
        <location evidence="5">Apoplast</location>
    </subcellularLocation>
    <text evidence="5">The precursor of STMP5 accumulates at the plasma membrane and is proteolytically cleaved to release the STMP5 in the apoplasm.</text>
</comment>
<comment type="tissue specificity">
    <text evidence="5">Mostly expressed in leaves, and, to a lower extent, in roots, stems, siliques, seeds and flowers.</text>
</comment>
<comment type="induction">
    <text evidence="5">Induced by pathogenic bacteria Pseudomonas syringae pv. tomato (Pst) DC3000, jasmonate (MeJA), ethylene (ET) and salicylic acid (SA), mainly in shoots.</text>
</comment>
<comment type="similarity">
    <text evidence="7">Belongs to the serine rich endogenous peptide (SCOOP) phytocytokine family.</text>
</comment>
<sequence>MRLSVFYIFITRLAMTKNATKNEMGSKSPNIVALVLPLLLILYTLSSQVEVVESTGRKLAFWGNPIVWTPHSNSCGGSPASVFASSKWTTGRPCRRSRPPGTNIPVSDQSP</sequence>
<feature type="signal peptide" evidence="3">
    <location>
        <begin position="1"/>
        <end position="46"/>
    </location>
</feature>
<feature type="propeptide" id="PRO_0000457264" description="Removed in mature form" evidence="2">
    <location>
        <begin position="47"/>
        <end status="unknown"/>
    </location>
</feature>
<feature type="peptide" id="PRO_0000457265" description="Secreted transmembrane peptide 5" evidence="2">
    <location>
        <begin status="unknown"/>
        <end position="111"/>
    </location>
</feature>
<feature type="region of interest" description="Disordered" evidence="4">
    <location>
        <begin position="89"/>
        <end position="111"/>
    </location>
</feature>
<feature type="short sequence motif" description="SCOOP motif" evidence="1">
    <location>
        <begin position="66"/>
        <end position="79"/>
    </location>
</feature>
<feature type="short sequence motif" description="SxS motif essential for MIK2 binding" evidence="2">
    <location>
        <begin position="72"/>
        <end position="74"/>
    </location>
</feature>
<reference key="1">
    <citation type="journal article" date="2000" name="Nature">
        <title>Sequence and analysis of chromosome 1 of the plant Arabidopsis thaliana.</title>
        <authorList>
            <person name="Theologis A."/>
            <person name="Ecker J.R."/>
            <person name="Palm C.J."/>
            <person name="Federspiel N.A."/>
            <person name="Kaul S."/>
            <person name="White O."/>
            <person name="Alonso J."/>
            <person name="Altafi H."/>
            <person name="Araujo R."/>
            <person name="Bowman C.L."/>
            <person name="Brooks S.Y."/>
            <person name="Buehler E."/>
            <person name="Chan A."/>
            <person name="Chao Q."/>
            <person name="Chen H."/>
            <person name="Cheuk R.F."/>
            <person name="Chin C.W."/>
            <person name="Chung M.K."/>
            <person name="Conn L."/>
            <person name="Conway A.B."/>
            <person name="Conway A.R."/>
            <person name="Creasy T.H."/>
            <person name="Dewar K."/>
            <person name="Dunn P."/>
            <person name="Etgu P."/>
            <person name="Feldblyum T.V."/>
            <person name="Feng J.-D."/>
            <person name="Fong B."/>
            <person name="Fujii C.Y."/>
            <person name="Gill J.E."/>
            <person name="Goldsmith A.D."/>
            <person name="Haas B."/>
            <person name="Hansen N.F."/>
            <person name="Hughes B."/>
            <person name="Huizar L."/>
            <person name="Hunter J.L."/>
            <person name="Jenkins J."/>
            <person name="Johnson-Hopson C."/>
            <person name="Khan S."/>
            <person name="Khaykin E."/>
            <person name="Kim C.J."/>
            <person name="Koo H.L."/>
            <person name="Kremenetskaia I."/>
            <person name="Kurtz D.B."/>
            <person name="Kwan A."/>
            <person name="Lam B."/>
            <person name="Langin-Hooper S."/>
            <person name="Lee A."/>
            <person name="Lee J.M."/>
            <person name="Lenz C.A."/>
            <person name="Li J.H."/>
            <person name="Li Y.-P."/>
            <person name="Lin X."/>
            <person name="Liu S.X."/>
            <person name="Liu Z.A."/>
            <person name="Luros J.S."/>
            <person name="Maiti R."/>
            <person name="Marziali A."/>
            <person name="Militscher J."/>
            <person name="Miranda M."/>
            <person name="Nguyen M."/>
            <person name="Nierman W.C."/>
            <person name="Osborne B.I."/>
            <person name="Pai G."/>
            <person name="Peterson J."/>
            <person name="Pham P.K."/>
            <person name="Rizzo M."/>
            <person name="Rooney T."/>
            <person name="Rowley D."/>
            <person name="Sakano H."/>
            <person name="Salzberg S.L."/>
            <person name="Schwartz J.R."/>
            <person name="Shinn P."/>
            <person name="Southwick A.M."/>
            <person name="Sun H."/>
            <person name="Tallon L.J."/>
            <person name="Tambunga G."/>
            <person name="Toriumi M.J."/>
            <person name="Town C.D."/>
            <person name="Utterback T."/>
            <person name="Van Aken S."/>
            <person name="Vaysberg M."/>
            <person name="Vysotskaia V.S."/>
            <person name="Walker M."/>
            <person name="Wu D."/>
            <person name="Yu G."/>
            <person name="Fraser C.M."/>
            <person name="Venter J.C."/>
            <person name="Davis R.W."/>
        </authorList>
    </citation>
    <scope>NUCLEOTIDE SEQUENCE [LARGE SCALE GENOMIC DNA]</scope>
    <source>
        <strain>cv. Columbia</strain>
    </source>
</reference>
<reference key="2">
    <citation type="journal article" date="2017" name="Plant J.">
        <title>Araport11: a complete reannotation of the Arabidopsis thaliana reference genome.</title>
        <authorList>
            <person name="Cheng C.Y."/>
            <person name="Krishnakumar V."/>
            <person name="Chan A.P."/>
            <person name="Thibaud-Nissen F."/>
            <person name="Schobel S."/>
            <person name="Town C.D."/>
        </authorList>
    </citation>
    <scope>GENOME REANNOTATION</scope>
    <source>
        <strain>cv. Columbia</strain>
    </source>
</reference>
<reference key="3">
    <citation type="journal article" date="2020" name="J. Integr. Plant Biol.">
        <title>The Brassicaceae-specific secreted peptides, STMPs, function in plant growth and pathogen defense.</title>
        <authorList>
            <person name="Yu Z."/>
            <person name="Xu Y."/>
            <person name="Zhu L."/>
            <person name="Zhang L."/>
            <person name="Liu L."/>
            <person name="Zhang D."/>
            <person name="Li D."/>
            <person name="Wu C."/>
            <person name="Huang J."/>
            <person name="Yang G."/>
            <person name="Yan K."/>
            <person name="Zhang S."/>
            <person name="Zheng C."/>
        </authorList>
    </citation>
    <scope>SUBCELLULAR LOCATION</scope>
    <scope>TISSUE SPECIFICITY</scope>
    <scope>INDUCTION BY BIOTIC AND ABIOTIC STRESSES</scope>
    <scope>GENE FAMILY</scope>
    <scope>NOMENCLATURE</scope>
    <source>
        <strain>cv. Columbia</strain>
    </source>
</reference>
<gene>
    <name evidence="6" type="primary">STMP5</name>
    <name evidence="8" type="ordered locus">At1g65490</name>
    <name evidence="9" type="ORF">F5I14.26</name>
</gene>